<proteinExistence type="inferred from homology"/>
<keyword id="KW-0007">Acetylation</keyword>
<keyword id="KW-0963">Cytoplasm</keyword>
<keyword id="KW-0206">Cytoskeleton</keyword>
<keyword id="KW-0342">GTP-binding</keyword>
<keyword id="KW-0378">Hydrolase</keyword>
<keyword id="KW-0460">Magnesium</keyword>
<keyword id="KW-0479">Metal-binding</keyword>
<keyword id="KW-0493">Microtubule</keyword>
<keyword id="KW-0547">Nucleotide-binding</keyword>
<reference key="1">
    <citation type="journal article" date="1994" name="J. Eukaryot. Microbiol.">
        <title>The alpha- and beta-tubulin genes of Euplotes octocarinatus.</title>
        <authorList>
            <person name="Liang A."/>
            <person name="Schmidt H.J."/>
            <person name="Heckmann K."/>
        </authorList>
    </citation>
    <scope>NUCLEOTIDE SEQUENCE [GENOMIC DNA]</scope>
    <source>
        <strain>3(58)-IX</strain>
    </source>
</reference>
<sequence>MREVISIHIGQGGIQVGNACWDLFCLEHGIQPDGQMPSDKTIGGGDDAFNTFFSETGAGKHVPRAVFLDLEPTVCDEVRTGTYRQLFHPEQLISGKEDAANNFARGHYTIGKEIVDLCLDRIRKLADNCTGLQGFIGFHSVGGGTGSGLGSLLLERLSVDYGKKSKLTFTIYPSPQVSTAVVEPYNSVLSTHSLLEHTDVAVMLDNEAVYDICRRNLDIERPTYTNLNRLIAQVISSLTASLRFDGALNVDVTEFQTNLVPYPRIHFMLSSYAPVISAEKAYHEQLSVAEITNSSFEPASMMAKCDPRHGKYMACCMMYRGDVVPKDVNAAVATIKTKRTIQFVDWSPTGFKCGINYQPPTVVPGGDLAKVMRAVCMISNSTAIAEVFSRIDHKFDLMYAKRAFVHWYVGEGMEEGEFSEAREDLAALEKDYEEVGIETAEGEGEEEGME</sequence>
<feature type="chain" id="PRO_0000048171" description="Tubulin alpha chain">
    <location>
        <begin position="1"/>
        <end position="450"/>
    </location>
</feature>
<feature type="active site" evidence="2">
    <location>
        <position position="254"/>
    </location>
</feature>
<feature type="binding site" evidence="2">
    <location>
        <position position="11"/>
    </location>
    <ligand>
        <name>GTP</name>
        <dbReference type="ChEBI" id="CHEBI:37565"/>
    </ligand>
</feature>
<feature type="binding site" evidence="2">
    <location>
        <position position="71"/>
    </location>
    <ligand>
        <name>GTP</name>
        <dbReference type="ChEBI" id="CHEBI:37565"/>
    </ligand>
</feature>
<feature type="binding site" evidence="2">
    <location>
        <position position="71"/>
    </location>
    <ligand>
        <name>Mg(2+)</name>
        <dbReference type="ChEBI" id="CHEBI:18420"/>
    </ligand>
</feature>
<feature type="binding site" evidence="2">
    <location>
        <position position="140"/>
    </location>
    <ligand>
        <name>GTP</name>
        <dbReference type="ChEBI" id="CHEBI:37565"/>
    </ligand>
</feature>
<feature type="binding site" evidence="2">
    <location>
        <position position="144"/>
    </location>
    <ligand>
        <name>GTP</name>
        <dbReference type="ChEBI" id="CHEBI:37565"/>
    </ligand>
</feature>
<feature type="binding site" evidence="2">
    <location>
        <position position="145"/>
    </location>
    <ligand>
        <name>GTP</name>
        <dbReference type="ChEBI" id="CHEBI:37565"/>
    </ligand>
</feature>
<feature type="binding site" evidence="2">
    <location>
        <position position="179"/>
    </location>
    <ligand>
        <name>GTP</name>
        <dbReference type="ChEBI" id="CHEBI:37565"/>
    </ligand>
</feature>
<feature type="binding site" evidence="2">
    <location>
        <position position="206"/>
    </location>
    <ligand>
        <name>GTP</name>
        <dbReference type="ChEBI" id="CHEBI:37565"/>
    </ligand>
</feature>
<feature type="binding site" evidence="2">
    <location>
        <position position="228"/>
    </location>
    <ligand>
        <name>GTP</name>
        <dbReference type="ChEBI" id="CHEBI:37565"/>
    </ligand>
</feature>
<feature type="modified residue" description="N6-acetyllysine" evidence="1">
    <location>
        <position position="40"/>
    </location>
</feature>
<accession>Q08114</accession>
<protein>
    <recommendedName>
        <fullName>Tubulin alpha chain</fullName>
        <ecNumber evidence="2">3.6.5.-</ecNumber>
    </recommendedName>
</protein>
<organism>
    <name type="scientific">Euplotoides octocarinatus</name>
    <name type="common">Freshwater ciliate</name>
    <name type="synonym">Euplotes octocarinatus</name>
    <dbReference type="NCBI Taxonomy" id="2716877"/>
    <lineage>
        <taxon>Eukaryota</taxon>
        <taxon>Sar</taxon>
        <taxon>Alveolata</taxon>
        <taxon>Ciliophora</taxon>
        <taxon>Intramacronucleata</taxon>
        <taxon>Spirotrichea</taxon>
        <taxon>Hypotrichia</taxon>
        <taxon>Euplotida</taxon>
        <taxon>Euplotidae</taxon>
        <taxon>Euplotes</taxon>
    </lineage>
</organism>
<name>TBA_EUPOC</name>
<evidence type="ECO:0000250" key="1"/>
<evidence type="ECO:0000250" key="2">
    <source>
        <dbReference type="UniProtKB" id="P68363"/>
    </source>
</evidence>
<evidence type="ECO:0000305" key="3"/>
<dbReference type="EC" id="3.6.5.-" evidence="2"/>
<dbReference type="EMBL" id="X69466">
    <property type="protein sequence ID" value="CAA49226.1"/>
    <property type="molecule type" value="Genomic_DNA"/>
</dbReference>
<dbReference type="PIR" id="S31399">
    <property type="entry name" value="S31399"/>
</dbReference>
<dbReference type="SMR" id="Q08114"/>
<dbReference type="GO" id="GO:0005737">
    <property type="term" value="C:cytoplasm"/>
    <property type="evidence" value="ECO:0007669"/>
    <property type="project" value="UniProtKB-KW"/>
</dbReference>
<dbReference type="GO" id="GO:0005874">
    <property type="term" value="C:microtubule"/>
    <property type="evidence" value="ECO:0007669"/>
    <property type="project" value="UniProtKB-KW"/>
</dbReference>
<dbReference type="GO" id="GO:0005525">
    <property type="term" value="F:GTP binding"/>
    <property type="evidence" value="ECO:0007669"/>
    <property type="project" value="UniProtKB-KW"/>
</dbReference>
<dbReference type="GO" id="GO:0016787">
    <property type="term" value="F:hydrolase activity"/>
    <property type="evidence" value="ECO:0007669"/>
    <property type="project" value="UniProtKB-KW"/>
</dbReference>
<dbReference type="GO" id="GO:0046872">
    <property type="term" value="F:metal ion binding"/>
    <property type="evidence" value="ECO:0007669"/>
    <property type="project" value="UniProtKB-KW"/>
</dbReference>
<dbReference type="GO" id="GO:0005200">
    <property type="term" value="F:structural constituent of cytoskeleton"/>
    <property type="evidence" value="ECO:0007669"/>
    <property type="project" value="InterPro"/>
</dbReference>
<dbReference type="GO" id="GO:0007017">
    <property type="term" value="P:microtubule-based process"/>
    <property type="evidence" value="ECO:0007669"/>
    <property type="project" value="InterPro"/>
</dbReference>
<dbReference type="CDD" id="cd02186">
    <property type="entry name" value="alpha_tubulin"/>
    <property type="match status" value="1"/>
</dbReference>
<dbReference type="FunFam" id="1.10.287.600:FF:000005">
    <property type="entry name" value="Tubulin alpha chain"/>
    <property type="match status" value="1"/>
</dbReference>
<dbReference type="FunFam" id="3.30.1330.20:FF:000001">
    <property type="entry name" value="Tubulin alpha chain"/>
    <property type="match status" value="1"/>
</dbReference>
<dbReference type="FunFam" id="3.40.50.1440:FF:000004">
    <property type="entry name" value="Tubulin alpha chain"/>
    <property type="match status" value="1"/>
</dbReference>
<dbReference type="Gene3D" id="1.10.287.600">
    <property type="entry name" value="Helix hairpin bin"/>
    <property type="match status" value="1"/>
</dbReference>
<dbReference type="Gene3D" id="3.30.1330.20">
    <property type="entry name" value="Tubulin/FtsZ, C-terminal domain"/>
    <property type="match status" value="1"/>
</dbReference>
<dbReference type="Gene3D" id="3.40.50.1440">
    <property type="entry name" value="Tubulin/FtsZ, GTPase domain"/>
    <property type="match status" value="1"/>
</dbReference>
<dbReference type="InterPro" id="IPR002452">
    <property type="entry name" value="Alpha_tubulin"/>
</dbReference>
<dbReference type="InterPro" id="IPR008280">
    <property type="entry name" value="Tub_FtsZ_C"/>
</dbReference>
<dbReference type="InterPro" id="IPR000217">
    <property type="entry name" value="Tubulin"/>
</dbReference>
<dbReference type="InterPro" id="IPR037103">
    <property type="entry name" value="Tubulin/FtsZ-like_C"/>
</dbReference>
<dbReference type="InterPro" id="IPR018316">
    <property type="entry name" value="Tubulin/FtsZ_2-layer-sand-dom"/>
</dbReference>
<dbReference type="InterPro" id="IPR036525">
    <property type="entry name" value="Tubulin/FtsZ_GTPase_sf"/>
</dbReference>
<dbReference type="InterPro" id="IPR023123">
    <property type="entry name" value="Tubulin_C"/>
</dbReference>
<dbReference type="InterPro" id="IPR017975">
    <property type="entry name" value="Tubulin_CS"/>
</dbReference>
<dbReference type="InterPro" id="IPR003008">
    <property type="entry name" value="Tubulin_FtsZ_GTPase"/>
</dbReference>
<dbReference type="PANTHER" id="PTHR11588">
    <property type="entry name" value="TUBULIN"/>
    <property type="match status" value="1"/>
</dbReference>
<dbReference type="Pfam" id="PF00091">
    <property type="entry name" value="Tubulin"/>
    <property type="match status" value="1"/>
</dbReference>
<dbReference type="Pfam" id="PF03953">
    <property type="entry name" value="Tubulin_C"/>
    <property type="match status" value="1"/>
</dbReference>
<dbReference type="PRINTS" id="PR01162">
    <property type="entry name" value="ALPHATUBULIN"/>
</dbReference>
<dbReference type="PRINTS" id="PR01161">
    <property type="entry name" value="TUBULIN"/>
</dbReference>
<dbReference type="SMART" id="SM00864">
    <property type="entry name" value="Tubulin"/>
    <property type="match status" value="1"/>
</dbReference>
<dbReference type="SMART" id="SM00865">
    <property type="entry name" value="Tubulin_C"/>
    <property type="match status" value="1"/>
</dbReference>
<dbReference type="SUPFAM" id="SSF55307">
    <property type="entry name" value="Tubulin C-terminal domain-like"/>
    <property type="match status" value="1"/>
</dbReference>
<dbReference type="SUPFAM" id="SSF52490">
    <property type="entry name" value="Tubulin nucleotide-binding domain-like"/>
    <property type="match status" value="1"/>
</dbReference>
<dbReference type="PROSITE" id="PS00227">
    <property type="entry name" value="TUBULIN"/>
    <property type="match status" value="1"/>
</dbReference>
<comment type="function">
    <text>Tubulin is the major constituent of microtubules, a cylinder consisting of laterally associated linear protofilaments composed of alpha- and beta-tubulin heterodimers. Microtubules grow by the addition of GTP-tubulin dimers to the microtubule end, where a stabilizing cap forms. Below the cap, tubulin dimers are in GDP-bound state, owing to GTPase activity of alpha-tubulin.</text>
</comment>
<comment type="catalytic activity">
    <reaction evidence="2">
        <text>GTP + H2O = GDP + phosphate + H(+)</text>
        <dbReference type="Rhea" id="RHEA:19669"/>
        <dbReference type="ChEBI" id="CHEBI:15377"/>
        <dbReference type="ChEBI" id="CHEBI:15378"/>
        <dbReference type="ChEBI" id="CHEBI:37565"/>
        <dbReference type="ChEBI" id="CHEBI:43474"/>
        <dbReference type="ChEBI" id="CHEBI:58189"/>
    </reaction>
    <physiologicalReaction direction="left-to-right" evidence="2">
        <dbReference type="Rhea" id="RHEA:19670"/>
    </physiologicalReaction>
</comment>
<comment type="cofactor">
    <cofactor evidence="2">
        <name>Mg(2+)</name>
        <dbReference type="ChEBI" id="CHEBI:18420"/>
    </cofactor>
</comment>
<comment type="subunit">
    <text>Dimer of alpha and beta chains. A typical microtubule is a hollow water-filled tube with an outer diameter of 25 nm and an inner diameter of 15 nM. Alpha-beta heterodimers associate head-to-tail to form protofilaments running lengthwise along the microtubule wall with the beta-tubulin subunit facing the microtubule plus end conferring a structural polarity. Microtubules usually have 13 protofilaments but different protofilament numbers can be found in some organisms and specialized cells.</text>
</comment>
<comment type="subcellular location">
    <subcellularLocation>
        <location>Cytoplasm</location>
        <location>Cytoskeleton</location>
    </subcellularLocation>
</comment>
<comment type="PTM">
    <text evidence="1">Acetylation of alpha chains at Lys-40 stabilizes microtubules and affects affinity and processivity of microtubule motors. This modification has a role in multiple cellular functions, ranging from cell motility, cell cycle progression or cell differentiation to intracellular trafficking and signaling (By similarity).</text>
</comment>
<comment type="similarity">
    <text evidence="3">Belongs to the tubulin family.</text>
</comment>